<name>CLPP_SHEFN</name>
<gene>
    <name evidence="1" type="primary">clpP</name>
    <name type="ordered locus">Sfri_2596</name>
</gene>
<proteinExistence type="inferred from homology"/>
<evidence type="ECO:0000255" key="1">
    <source>
        <dbReference type="HAMAP-Rule" id="MF_00444"/>
    </source>
</evidence>
<comment type="function">
    <text evidence="1">Cleaves peptides in various proteins in a process that requires ATP hydrolysis. Has a chymotrypsin-like activity. Plays a major role in the degradation of misfolded proteins.</text>
</comment>
<comment type="catalytic activity">
    <reaction evidence="1">
        <text>Hydrolysis of proteins to small peptides in the presence of ATP and magnesium. alpha-casein is the usual test substrate. In the absence of ATP, only oligopeptides shorter than five residues are hydrolyzed (such as succinyl-Leu-Tyr-|-NHMec, and Leu-Tyr-Leu-|-Tyr-Trp, in which cleavage of the -Tyr-|-Leu- and -Tyr-|-Trp bonds also occurs).</text>
        <dbReference type="EC" id="3.4.21.92"/>
    </reaction>
</comment>
<comment type="subunit">
    <text evidence="1">Fourteen ClpP subunits assemble into 2 heptameric rings which stack back to back to give a disk-like structure with a central cavity, resembling the structure of eukaryotic proteasomes.</text>
</comment>
<comment type="subcellular location">
    <subcellularLocation>
        <location evidence="1">Cytoplasm</location>
    </subcellularLocation>
</comment>
<comment type="similarity">
    <text evidence="1">Belongs to the peptidase S14 family.</text>
</comment>
<reference key="1">
    <citation type="submission" date="2006-08" db="EMBL/GenBank/DDBJ databases">
        <title>Complete sequence of Shewanella frigidimarina NCIMB 400.</title>
        <authorList>
            <consortium name="US DOE Joint Genome Institute"/>
            <person name="Copeland A."/>
            <person name="Lucas S."/>
            <person name="Lapidus A."/>
            <person name="Barry K."/>
            <person name="Detter J.C."/>
            <person name="Glavina del Rio T."/>
            <person name="Hammon N."/>
            <person name="Israni S."/>
            <person name="Dalin E."/>
            <person name="Tice H."/>
            <person name="Pitluck S."/>
            <person name="Fredrickson J.K."/>
            <person name="Kolker E."/>
            <person name="McCuel L.A."/>
            <person name="DiChristina T."/>
            <person name="Nealson K.H."/>
            <person name="Newman D."/>
            <person name="Tiedje J.M."/>
            <person name="Zhou J."/>
            <person name="Romine M.F."/>
            <person name="Culley D.E."/>
            <person name="Serres M."/>
            <person name="Chertkov O."/>
            <person name="Brettin T."/>
            <person name="Bruce D."/>
            <person name="Han C."/>
            <person name="Tapia R."/>
            <person name="Gilna P."/>
            <person name="Schmutz J."/>
            <person name="Larimer F."/>
            <person name="Land M."/>
            <person name="Hauser L."/>
            <person name="Kyrpides N."/>
            <person name="Mikhailova N."/>
            <person name="Richardson P."/>
        </authorList>
    </citation>
    <scope>NUCLEOTIDE SEQUENCE [LARGE SCALE GENOMIC DNA]</scope>
    <source>
        <strain>NCIMB 400</strain>
    </source>
</reference>
<feature type="chain" id="PRO_1000072345" description="ATP-dependent Clp protease proteolytic subunit">
    <location>
        <begin position="1"/>
        <end position="203"/>
    </location>
</feature>
<feature type="active site" description="Nucleophile" evidence="1">
    <location>
        <position position="107"/>
    </location>
</feature>
<feature type="active site" evidence="1">
    <location>
        <position position="132"/>
    </location>
</feature>
<accession>Q07ZX8</accession>
<keyword id="KW-0963">Cytoplasm</keyword>
<keyword id="KW-0378">Hydrolase</keyword>
<keyword id="KW-0645">Protease</keyword>
<keyword id="KW-1185">Reference proteome</keyword>
<keyword id="KW-0720">Serine protease</keyword>
<sequence length="203" mass="22163">MHNAPESVLNALVPMVVEQTAKGERSYDIYSRLLKERVIFLVGQVEEHMANLIVAQLLFLESESPDKDIYLYINSPGGSVTAGMAIYDTMQFIKPNVSTVCMGQAASMGAFLLAGGAKGKRHCLPNSRVMIHQPLGGFQGQASDIAIHAKEILGIKNKLNQMLAEHTGQPLDIIERDTDRDNFMSATQAVEYGIVDSLLTSRG</sequence>
<organism>
    <name type="scientific">Shewanella frigidimarina (strain NCIMB 400)</name>
    <dbReference type="NCBI Taxonomy" id="318167"/>
    <lineage>
        <taxon>Bacteria</taxon>
        <taxon>Pseudomonadati</taxon>
        <taxon>Pseudomonadota</taxon>
        <taxon>Gammaproteobacteria</taxon>
        <taxon>Alteromonadales</taxon>
        <taxon>Shewanellaceae</taxon>
        <taxon>Shewanella</taxon>
    </lineage>
</organism>
<protein>
    <recommendedName>
        <fullName evidence="1">ATP-dependent Clp protease proteolytic subunit</fullName>
        <ecNumber evidence="1">3.4.21.92</ecNumber>
    </recommendedName>
    <alternativeName>
        <fullName evidence="1">Endopeptidase Clp</fullName>
    </alternativeName>
</protein>
<dbReference type="EC" id="3.4.21.92" evidence="1"/>
<dbReference type="EMBL" id="CP000447">
    <property type="protein sequence ID" value="ABI72437.1"/>
    <property type="molecule type" value="Genomic_DNA"/>
</dbReference>
<dbReference type="RefSeq" id="WP_011638046.1">
    <property type="nucleotide sequence ID" value="NC_008345.1"/>
</dbReference>
<dbReference type="SMR" id="Q07ZX8"/>
<dbReference type="STRING" id="318167.Sfri_2596"/>
<dbReference type="MEROPS" id="S14.001"/>
<dbReference type="KEGG" id="sfr:Sfri_2596"/>
<dbReference type="eggNOG" id="COG0740">
    <property type="taxonomic scope" value="Bacteria"/>
</dbReference>
<dbReference type="HOGENOM" id="CLU_058707_3_2_6"/>
<dbReference type="OrthoDB" id="9802800at2"/>
<dbReference type="Proteomes" id="UP000000684">
    <property type="component" value="Chromosome"/>
</dbReference>
<dbReference type="GO" id="GO:0005737">
    <property type="term" value="C:cytoplasm"/>
    <property type="evidence" value="ECO:0007669"/>
    <property type="project" value="UniProtKB-SubCell"/>
</dbReference>
<dbReference type="GO" id="GO:0009368">
    <property type="term" value="C:endopeptidase Clp complex"/>
    <property type="evidence" value="ECO:0007669"/>
    <property type="project" value="TreeGrafter"/>
</dbReference>
<dbReference type="GO" id="GO:0004176">
    <property type="term" value="F:ATP-dependent peptidase activity"/>
    <property type="evidence" value="ECO:0007669"/>
    <property type="project" value="InterPro"/>
</dbReference>
<dbReference type="GO" id="GO:0051117">
    <property type="term" value="F:ATPase binding"/>
    <property type="evidence" value="ECO:0007669"/>
    <property type="project" value="TreeGrafter"/>
</dbReference>
<dbReference type="GO" id="GO:0004252">
    <property type="term" value="F:serine-type endopeptidase activity"/>
    <property type="evidence" value="ECO:0007669"/>
    <property type="project" value="UniProtKB-UniRule"/>
</dbReference>
<dbReference type="GO" id="GO:0006515">
    <property type="term" value="P:protein quality control for misfolded or incompletely synthesized proteins"/>
    <property type="evidence" value="ECO:0007669"/>
    <property type="project" value="TreeGrafter"/>
</dbReference>
<dbReference type="CDD" id="cd07017">
    <property type="entry name" value="S14_ClpP_2"/>
    <property type="match status" value="1"/>
</dbReference>
<dbReference type="FunFam" id="3.90.226.10:FF:000001">
    <property type="entry name" value="ATP-dependent Clp protease proteolytic subunit"/>
    <property type="match status" value="1"/>
</dbReference>
<dbReference type="Gene3D" id="3.90.226.10">
    <property type="entry name" value="2-enoyl-CoA Hydratase, Chain A, domain 1"/>
    <property type="match status" value="1"/>
</dbReference>
<dbReference type="HAMAP" id="MF_00444">
    <property type="entry name" value="ClpP"/>
    <property type="match status" value="1"/>
</dbReference>
<dbReference type="InterPro" id="IPR001907">
    <property type="entry name" value="ClpP"/>
</dbReference>
<dbReference type="InterPro" id="IPR029045">
    <property type="entry name" value="ClpP/crotonase-like_dom_sf"/>
</dbReference>
<dbReference type="InterPro" id="IPR023562">
    <property type="entry name" value="ClpP/TepA"/>
</dbReference>
<dbReference type="InterPro" id="IPR033135">
    <property type="entry name" value="ClpP_His_AS"/>
</dbReference>
<dbReference type="InterPro" id="IPR018215">
    <property type="entry name" value="ClpP_Ser_AS"/>
</dbReference>
<dbReference type="NCBIfam" id="TIGR00493">
    <property type="entry name" value="clpP"/>
    <property type="match status" value="1"/>
</dbReference>
<dbReference type="NCBIfam" id="NF001368">
    <property type="entry name" value="PRK00277.1"/>
    <property type="match status" value="1"/>
</dbReference>
<dbReference type="NCBIfam" id="NF009205">
    <property type="entry name" value="PRK12553.1"/>
    <property type="match status" value="1"/>
</dbReference>
<dbReference type="PANTHER" id="PTHR10381">
    <property type="entry name" value="ATP-DEPENDENT CLP PROTEASE PROTEOLYTIC SUBUNIT"/>
    <property type="match status" value="1"/>
</dbReference>
<dbReference type="PANTHER" id="PTHR10381:SF70">
    <property type="entry name" value="ATP-DEPENDENT CLP PROTEASE PROTEOLYTIC SUBUNIT"/>
    <property type="match status" value="1"/>
</dbReference>
<dbReference type="Pfam" id="PF00574">
    <property type="entry name" value="CLP_protease"/>
    <property type="match status" value="1"/>
</dbReference>
<dbReference type="PRINTS" id="PR00127">
    <property type="entry name" value="CLPPROTEASEP"/>
</dbReference>
<dbReference type="SUPFAM" id="SSF52096">
    <property type="entry name" value="ClpP/crotonase"/>
    <property type="match status" value="1"/>
</dbReference>
<dbReference type="PROSITE" id="PS00382">
    <property type="entry name" value="CLP_PROTEASE_HIS"/>
    <property type="match status" value="1"/>
</dbReference>
<dbReference type="PROSITE" id="PS00381">
    <property type="entry name" value="CLP_PROTEASE_SER"/>
    <property type="match status" value="1"/>
</dbReference>